<dbReference type="EMBL" id="X64370">
    <property type="protein sequence ID" value="CAA45723.1"/>
    <property type="molecule type" value="Genomic_DNA"/>
</dbReference>
<dbReference type="EMBL" id="D17329">
    <property type="protein sequence ID" value="BAA04149.1"/>
    <property type="molecule type" value="mRNA"/>
</dbReference>
<dbReference type="EMBL" id="D17330">
    <property type="protein sequence ID" value="BAA04150.1"/>
    <property type="molecule type" value="mRNA"/>
</dbReference>
<dbReference type="PIR" id="S25314">
    <property type="entry name" value="S25314"/>
</dbReference>
<dbReference type="RefSeq" id="NP_001275101.2">
    <property type="nucleotide sequence ID" value="NM_001288172.2"/>
</dbReference>
<dbReference type="SMR" id="P30941"/>
<dbReference type="Allergome" id="3492">
    <property type="allergen name" value="Sola t 4.0101"/>
</dbReference>
<dbReference type="Allergome" id="642">
    <property type="allergen name" value="Sola t 4"/>
</dbReference>
<dbReference type="MEROPS" id="I03.020"/>
<dbReference type="PaxDb" id="4113-PGSC0003DMT400026257"/>
<dbReference type="EnsemblPlants" id="PGSC0003DMT400026257">
    <property type="protein sequence ID" value="PGSC0003DMT400026257"/>
    <property type="gene ID" value="PGSC0003DMG400010128"/>
</dbReference>
<dbReference type="GeneID" id="102577642"/>
<dbReference type="Gramene" id="PGSC0003DMT400026257">
    <property type="protein sequence ID" value="PGSC0003DMT400026257"/>
    <property type="gene ID" value="PGSC0003DMG400010128"/>
</dbReference>
<dbReference type="KEGG" id="sot:102577782"/>
<dbReference type="HOGENOM" id="CLU_090145_2_0_1"/>
<dbReference type="InParanoid" id="P30941"/>
<dbReference type="OMA" id="LHINQDI"/>
<dbReference type="OrthoDB" id="1918435at2759"/>
<dbReference type="Proteomes" id="UP000011115">
    <property type="component" value="Unassembled WGS sequence"/>
</dbReference>
<dbReference type="ExpressionAtlas" id="P30941">
    <property type="expression patterns" value="baseline"/>
</dbReference>
<dbReference type="GO" id="GO:0005773">
    <property type="term" value="C:vacuole"/>
    <property type="evidence" value="ECO:0000314"/>
    <property type="project" value="UniProtKB"/>
</dbReference>
<dbReference type="GO" id="GO:0004867">
    <property type="term" value="F:serine-type endopeptidase inhibitor activity"/>
    <property type="evidence" value="ECO:0007669"/>
    <property type="project" value="UniProtKB-KW"/>
</dbReference>
<dbReference type="CDD" id="cd23372">
    <property type="entry name" value="beta-trefoil_STI_CPI-like"/>
    <property type="match status" value="1"/>
</dbReference>
<dbReference type="FunFam" id="2.80.10.50:FF:000090">
    <property type="entry name" value="Kunitz-type inhibitor B"/>
    <property type="match status" value="1"/>
</dbReference>
<dbReference type="Gene3D" id="2.80.10.50">
    <property type="match status" value="1"/>
</dbReference>
<dbReference type="InterPro" id="IPR011065">
    <property type="entry name" value="Kunitz_inhibitor_STI-like_sf"/>
</dbReference>
<dbReference type="InterPro" id="IPR002160">
    <property type="entry name" value="Prot_inh_Kunz-lg"/>
</dbReference>
<dbReference type="PANTHER" id="PTHR33107">
    <property type="entry name" value="KUNITZ TRYPSIN INHIBITOR 2"/>
    <property type="match status" value="1"/>
</dbReference>
<dbReference type="PANTHER" id="PTHR33107:SF38">
    <property type="entry name" value="SERINE PROTEASE INHIBITOR 5"/>
    <property type="match status" value="1"/>
</dbReference>
<dbReference type="Pfam" id="PF00197">
    <property type="entry name" value="Kunitz_legume"/>
    <property type="match status" value="1"/>
</dbReference>
<dbReference type="PRINTS" id="PR00291">
    <property type="entry name" value="KUNITZINHBTR"/>
</dbReference>
<dbReference type="SMART" id="SM00452">
    <property type="entry name" value="STI"/>
    <property type="match status" value="1"/>
</dbReference>
<dbReference type="SUPFAM" id="SSF50386">
    <property type="entry name" value="STI-like"/>
    <property type="match status" value="1"/>
</dbReference>
<protein>
    <recommendedName>
        <fullName>Serine protease inhibitor 7</fullName>
    </recommendedName>
    <alternativeName>
        <fullName>PIGEN1</fullName>
        <shortName>PIG</shortName>
    </alternativeName>
    <alternativeName>
        <fullName>STPIA</fullName>
    </alternativeName>
    <alternativeName>
        <fullName>STPIB</fullName>
    </alternativeName>
    <alternativeName>
        <fullName>pF4</fullName>
    </alternativeName>
    <alternativeName>
        <fullName>pKEN14-28</fullName>
    </alternativeName>
    <allergenName>Sola t 4</allergenName>
</protein>
<organism>
    <name type="scientific">Solanum tuberosum</name>
    <name type="common">Potato</name>
    <dbReference type="NCBI Taxonomy" id="4113"/>
    <lineage>
        <taxon>Eukaryota</taxon>
        <taxon>Viridiplantae</taxon>
        <taxon>Streptophyta</taxon>
        <taxon>Embryophyta</taxon>
        <taxon>Tracheophyta</taxon>
        <taxon>Spermatophyta</taxon>
        <taxon>Magnoliopsida</taxon>
        <taxon>eudicotyledons</taxon>
        <taxon>Gunneridae</taxon>
        <taxon>Pentapetalae</taxon>
        <taxon>asterids</taxon>
        <taxon>lamiids</taxon>
        <taxon>Solanales</taxon>
        <taxon>Solanaceae</taxon>
        <taxon>Solanoideae</taxon>
        <taxon>Solaneae</taxon>
        <taxon>Solanum</taxon>
    </lineage>
</organism>
<proteinExistence type="evidence at protein level"/>
<comment type="function">
    <text evidence="1">Inhibitor of trypsin (serine protease). May protect the plant by inhibiting proteases of invading organisms (By similarity).</text>
</comment>
<comment type="subcellular location">
    <subcellularLocation>
        <location>Vacuole</location>
    </subcellularLocation>
</comment>
<comment type="tissue specificity">
    <text>Tubers. Not detected in root, stem, leaves or flower bud.</text>
</comment>
<comment type="induction">
    <text>Not induced by sucrose, methyl jasmonate or wounding.</text>
</comment>
<comment type="allergen">
    <text>Causes an allergic reaction in human.</text>
</comment>
<comment type="miscellaneous">
    <text>Has a single chain structure.</text>
</comment>
<comment type="similarity">
    <text evidence="3">Belongs to the protease inhibitor I3 (leguminous Kunitz-type inhibitor) family.</text>
</comment>
<comment type="caution">
    <text evidence="3">Was originally thought to be an aspartic proteinase inhibitor (PubMed:1391774, PubMed:1515078).</text>
</comment>
<reference key="1">
    <citation type="journal article" date="1992" name="Plant Mol. Biol.">
        <title>Isolation and sequence analysis of the genomic DNA fragment encoding an aspartic proteinase inhibitor homologue from potato (Solanum tuberosum L.).</title>
        <authorList>
            <person name="Barlic-Maganja D."/>
            <person name="Strukelj B."/>
            <person name="Pungercar J."/>
            <person name="Gubensek F."/>
            <person name="Turk V."/>
            <person name="Kregar I."/>
        </authorList>
    </citation>
    <scope>NUCLEOTIDE SEQUENCE [GENOMIC DNA]</scope>
    <source>
        <strain>cv. Pentland squire</strain>
        <tissue>Callus</tissue>
    </source>
</reference>
<reference key="2">
    <citation type="journal article" date="1992" name="Biol. Chem. Hoppe-Seyler">
        <title>Characterization of aspartic proteinase inhibitors from potato at the gene, cDNA and protein levels.</title>
        <authorList>
            <person name="Strukelj B."/>
            <person name="Pungercar J."/>
            <person name="Mesko P."/>
            <person name="Barlic-Maganja D."/>
            <person name="Gubensek F."/>
            <person name="Kregar I."/>
            <person name="Turk V."/>
        </authorList>
    </citation>
    <scope>NUCLEOTIDE SEQUENCE</scope>
    <source>
        <strain>cv. Pentland squire</strain>
        <tissue>Tuber</tissue>
    </source>
</reference>
<reference key="3">
    <citation type="journal article" date="1994" name="Plant Cell Physiol.">
        <title>A family of potato genes that encode Kunitz-type proteinase inhibitors: structural comparisons and differential expression.</title>
        <authorList>
            <person name="Ishikawa A."/>
            <person name="Ohta S."/>
            <person name="Matsuoka K."/>
            <person name="Hattori T."/>
            <person name="Nakamura K."/>
        </authorList>
    </citation>
    <scope>NUCLEOTIDE SEQUENCE [MRNA]</scope>
    <scope>PROTEIN SEQUENCE OF 29-38</scope>
    <source>
        <strain>cv. Danshaku</strain>
    </source>
</reference>
<reference key="4">
    <citation type="journal article" date="2011" name="Nature">
        <title>Genome sequence and analysis of the tuber crop potato.</title>
        <authorList>
            <consortium name="The Potato Genome Sequencing Consortium"/>
        </authorList>
    </citation>
    <scope>NUCLEOTIDE SEQUENCE [LARGE SCALE GENOMIC DNA]</scope>
    <source>
        <strain>cv. DM1-3 516 R44</strain>
    </source>
</reference>
<sequence length="221" mass="24028">MKCLFLLCLCLVPIVVFSSTFTSKNPINLPSDATPVLDVAGKELDSRLSYRIISTFWGALGGDVYLGKSPNSDAPCANGIFRYNSDVGPSGTPVRFIGSSSHFGQGIFENELLNIQFAISTSKLCVSYTIWKVGDYDASLGTMLLETGGTIGQADSSWFKIVKSSQFGYNLLYCPVTSTMSCPFSSDDQFCLKVGVVHQNGKRRLALVKDNPLDVSFKQVQ</sequence>
<keyword id="KW-0020">Allergen</keyword>
<keyword id="KW-0903">Direct protein sequencing</keyword>
<keyword id="KW-1015">Disulfide bond</keyword>
<keyword id="KW-0646">Protease inhibitor</keyword>
<keyword id="KW-1185">Reference proteome</keyword>
<keyword id="KW-0722">Serine protease inhibitor</keyword>
<keyword id="KW-0732">Signal</keyword>
<keyword id="KW-0926">Vacuole</keyword>
<feature type="signal peptide">
    <location>
        <begin position="1"/>
        <end position="22"/>
    </location>
</feature>
<feature type="propeptide" id="PRO_0000016908" evidence="2">
    <location>
        <begin position="23"/>
        <end position="28"/>
    </location>
</feature>
<feature type="chain" id="PRO_0000016909" description="Serine protease inhibitor 7">
    <location>
        <begin position="29"/>
        <end position="221"/>
    </location>
</feature>
<feature type="short sequence motif" description="Vacuolar targeting signal" evidence="1">
    <location>
        <begin position="25"/>
        <end position="30"/>
    </location>
</feature>
<feature type="site" description="Reactive bond for trypsin" evidence="1">
    <location>
        <begin position="95"/>
        <end position="96"/>
    </location>
</feature>
<feature type="site" description="Reactive bond for chymotrypsin" evidence="1">
    <location>
        <begin position="143"/>
        <end position="144"/>
    </location>
</feature>
<feature type="disulfide bond" evidence="1">
    <location>
        <begin position="76"/>
        <end position="125"/>
    </location>
</feature>
<feature type="disulfide bond" evidence="1">
    <location>
        <begin position="174"/>
        <end position="191"/>
    </location>
</feature>
<feature type="sequence conflict" description="In Ref. 1 and 2." evidence="3" ref="1 2">
    <location>
        <begin position="97"/>
        <end position="100"/>
    </location>
</feature>
<feature type="sequence conflict" description="In Ref. 3; BAA04150." evidence="3" ref="3">
    <original>S</original>
    <variation>R</variation>
    <location>
        <position position="181"/>
    </location>
</feature>
<accession>P30941</accession>
<accession>Q41481</accession>
<accession>Q41482</accession>
<name>SPI7_SOLTU</name>
<evidence type="ECO:0000250" key="1"/>
<evidence type="ECO:0000269" key="2">
    <source>
    </source>
</evidence>
<evidence type="ECO:0000305" key="3"/>